<name>RL33_CROS8</name>
<proteinExistence type="inferred from homology"/>
<sequence>MAKGIREKIKLVSSAGTGHFYTTTKNKRTKPEKLELKKFDPVVRQHVLYKEAKIK</sequence>
<protein>
    <recommendedName>
        <fullName evidence="1">Large ribosomal subunit protein bL33</fullName>
    </recommendedName>
    <alternativeName>
        <fullName evidence="2">50S ribosomal protein L33</fullName>
    </alternativeName>
</protein>
<reference key="1">
    <citation type="journal article" date="2010" name="PLoS ONE">
        <title>Genome sequence of Cronobacter sakazakii BAA-894 and comparative genomic hybridization analysis with other Cronobacter species.</title>
        <authorList>
            <person name="Kucerova E."/>
            <person name="Clifton S.W."/>
            <person name="Xia X.Q."/>
            <person name="Long F."/>
            <person name="Porwollik S."/>
            <person name="Fulton L."/>
            <person name="Fronick C."/>
            <person name="Minx P."/>
            <person name="Kyung K."/>
            <person name="Warren W."/>
            <person name="Fulton R."/>
            <person name="Feng D."/>
            <person name="Wollam A."/>
            <person name="Shah N."/>
            <person name="Bhonagiri V."/>
            <person name="Nash W.E."/>
            <person name="Hallsworth-Pepin K."/>
            <person name="Wilson R.K."/>
            <person name="McClelland M."/>
            <person name="Forsythe S.J."/>
        </authorList>
    </citation>
    <scope>NUCLEOTIDE SEQUENCE [LARGE SCALE GENOMIC DNA]</scope>
    <source>
        <strain>ATCC BAA-894</strain>
    </source>
</reference>
<accession>A7MQ96</accession>
<dbReference type="EMBL" id="CP000783">
    <property type="protein sequence ID" value="ABU79276.1"/>
    <property type="molecule type" value="Genomic_DNA"/>
</dbReference>
<dbReference type="RefSeq" id="WP_003024094.1">
    <property type="nucleotide sequence ID" value="NC_009778.1"/>
</dbReference>
<dbReference type="SMR" id="A7MQ96"/>
<dbReference type="GeneID" id="98390706"/>
<dbReference type="KEGG" id="esa:ESA_04095"/>
<dbReference type="HOGENOM" id="CLU_190949_1_1_6"/>
<dbReference type="Proteomes" id="UP000000260">
    <property type="component" value="Chromosome"/>
</dbReference>
<dbReference type="GO" id="GO:0022625">
    <property type="term" value="C:cytosolic large ribosomal subunit"/>
    <property type="evidence" value="ECO:0007669"/>
    <property type="project" value="TreeGrafter"/>
</dbReference>
<dbReference type="GO" id="GO:0003735">
    <property type="term" value="F:structural constituent of ribosome"/>
    <property type="evidence" value="ECO:0007669"/>
    <property type="project" value="InterPro"/>
</dbReference>
<dbReference type="GO" id="GO:0006412">
    <property type="term" value="P:translation"/>
    <property type="evidence" value="ECO:0007669"/>
    <property type="project" value="UniProtKB-UniRule"/>
</dbReference>
<dbReference type="FunFam" id="2.20.28.120:FF:000001">
    <property type="entry name" value="50S ribosomal protein L33"/>
    <property type="match status" value="1"/>
</dbReference>
<dbReference type="Gene3D" id="2.20.28.120">
    <property type="entry name" value="Ribosomal protein L33"/>
    <property type="match status" value="1"/>
</dbReference>
<dbReference type="HAMAP" id="MF_00294">
    <property type="entry name" value="Ribosomal_bL33"/>
    <property type="match status" value="1"/>
</dbReference>
<dbReference type="InterPro" id="IPR001705">
    <property type="entry name" value="Ribosomal_bL33"/>
</dbReference>
<dbReference type="InterPro" id="IPR018264">
    <property type="entry name" value="Ribosomal_bL33_CS"/>
</dbReference>
<dbReference type="InterPro" id="IPR038584">
    <property type="entry name" value="Ribosomal_bL33_sf"/>
</dbReference>
<dbReference type="InterPro" id="IPR011332">
    <property type="entry name" value="Ribosomal_zn-bd"/>
</dbReference>
<dbReference type="NCBIfam" id="NF001860">
    <property type="entry name" value="PRK00595.1"/>
    <property type="match status" value="1"/>
</dbReference>
<dbReference type="NCBIfam" id="TIGR01023">
    <property type="entry name" value="rpmG_bact"/>
    <property type="match status" value="1"/>
</dbReference>
<dbReference type="PANTHER" id="PTHR15238">
    <property type="entry name" value="54S RIBOSOMAL PROTEIN L39, MITOCHONDRIAL"/>
    <property type="match status" value="1"/>
</dbReference>
<dbReference type="PANTHER" id="PTHR15238:SF1">
    <property type="entry name" value="LARGE RIBOSOMAL SUBUNIT PROTEIN BL33M"/>
    <property type="match status" value="1"/>
</dbReference>
<dbReference type="Pfam" id="PF00471">
    <property type="entry name" value="Ribosomal_L33"/>
    <property type="match status" value="1"/>
</dbReference>
<dbReference type="SUPFAM" id="SSF57829">
    <property type="entry name" value="Zn-binding ribosomal proteins"/>
    <property type="match status" value="1"/>
</dbReference>
<dbReference type="PROSITE" id="PS00582">
    <property type="entry name" value="RIBOSOMAL_L33"/>
    <property type="match status" value="1"/>
</dbReference>
<keyword id="KW-1185">Reference proteome</keyword>
<keyword id="KW-0687">Ribonucleoprotein</keyword>
<keyword id="KW-0689">Ribosomal protein</keyword>
<gene>
    <name evidence="1" type="primary">rpmG</name>
    <name type="ordered locus">ESA_04095</name>
</gene>
<organism>
    <name type="scientific">Cronobacter sakazakii (strain ATCC BAA-894)</name>
    <name type="common">Enterobacter sakazakii</name>
    <dbReference type="NCBI Taxonomy" id="290339"/>
    <lineage>
        <taxon>Bacteria</taxon>
        <taxon>Pseudomonadati</taxon>
        <taxon>Pseudomonadota</taxon>
        <taxon>Gammaproteobacteria</taxon>
        <taxon>Enterobacterales</taxon>
        <taxon>Enterobacteriaceae</taxon>
        <taxon>Cronobacter</taxon>
    </lineage>
</organism>
<feature type="chain" id="PRO_1000004166" description="Large ribosomal subunit protein bL33">
    <location>
        <begin position="1"/>
        <end position="55"/>
    </location>
</feature>
<evidence type="ECO:0000255" key="1">
    <source>
        <dbReference type="HAMAP-Rule" id="MF_00294"/>
    </source>
</evidence>
<evidence type="ECO:0000305" key="2"/>
<comment type="similarity">
    <text evidence="1">Belongs to the bacterial ribosomal protein bL33 family.</text>
</comment>